<organism>
    <name type="scientific">Escherichia coli O6:K15:H31 (strain 536 / UPEC)</name>
    <dbReference type="NCBI Taxonomy" id="362663"/>
    <lineage>
        <taxon>Bacteria</taxon>
        <taxon>Pseudomonadati</taxon>
        <taxon>Pseudomonadota</taxon>
        <taxon>Gammaproteobacteria</taxon>
        <taxon>Enterobacterales</taxon>
        <taxon>Enterobacteriaceae</taxon>
        <taxon>Escherichia</taxon>
    </lineage>
</organism>
<dbReference type="EC" id="6.1.1.15" evidence="1"/>
<dbReference type="EMBL" id="CP000247">
    <property type="protein sequence ID" value="ABG68244.1"/>
    <property type="molecule type" value="Genomic_DNA"/>
</dbReference>
<dbReference type="RefSeq" id="WP_001260694.1">
    <property type="nucleotide sequence ID" value="NC_008253.1"/>
</dbReference>
<dbReference type="SMR" id="Q0TLD7"/>
<dbReference type="KEGG" id="ecp:ECP_0204"/>
<dbReference type="HOGENOM" id="CLU_016739_0_0_6"/>
<dbReference type="Proteomes" id="UP000009182">
    <property type="component" value="Chromosome"/>
</dbReference>
<dbReference type="GO" id="GO:0005829">
    <property type="term" value="C:cytosol"/>
    <property type="evidence" value="ECO:0007669"/>
    <property type="project" value="TreeGrafter"/>
</dbReference>
<dbReference type="GO" id="GO:0002161">
    <property type="term" value="F:aminoacyl-tRNA deacylase activity"/>
    <property type="evidence" value="ECO:0007669"/>
    <property type="project" value="InterPro"/>
</dbReference>
<dbReference type="GO" id="GO:0005524">
    <property type="term" value="F:ATP binding"/>
    <property type="evidence" value="ECO:0007669"/>
    <property type="project" value="UniProtKB-UniRule"/>
</dbReference>
<dbReference type="GO" id="GO:0004827">
    <property type="term" value="F:proline-tRNA ligase activity"/>
    <property type="evidence" value="ECO:0007669"/>
    <property type="project" value="UniProtKB-UniRule"/>
</dbReference>
<dbReference type="GO" id="GO:0006433">
    <property type="term" value="P:prolyl-tRNA aminoacylation"/>
    <property type="evidence" value="ECO:0007669"/>
    <property type="project" value="UniProtKB-UniRule"/>
</dbReference>
<dbReference type="CDD" id="cd04334">
    <property type="entry name" value="ProRS-INS"/>
    <property type="match status" value="1"/>
</dbReference>
<dbReference type="CDD" id="cd00861">
    <property type="entry name" value="ProRS_anticodon_short"/>
    <property type="match status" value="1"/>
</dbReference>
<dbReference type="CDD" id="cd00779">
    <property type="entry name" value="ProRS_core_prok"/>
    <property type="match status" value="1"/>
</dbReference>
<dbReference type="FunFam" id="3.30.930.10:FF:000043">
    <property type="entry name" value="Proline--tRNA ligase"/>
    <property type="match status" value="1"/>
</dbReference>
<dbReference type="FunFam" id="3.30.930.10:FF:000097">
    <property type="entry name" value="Proline--tRNA ligase"/>
    <property type="match status" value="1"/>
</dbReference>
<dbReference type="FunFam" id="3.40.50.800:FF:000006">
    <property type="entry name" value="Proline--tRNA ligase"/>
    <property type="match status" value="1"/>
</dbReference>
<dbReference type="FunFam" id="3.90.960.10:FF:000001">
    <property type="entry name" value="Proline--tRNA ligase"/>
    <property type="match status" value="1"/>
</dbReference>
<dbReference type="Gene3D" id="3.40.50.800">
    <property type="entry name" value="Anticodon-binding domain"/>
    <property type="match status" value="1"/>
</dbReference>
<dbReference type="Gene3D" id="3.30.930.10">
    <property type="entry name" value="Bira Bifunctional Protein, Domain 2"/>
    <property type="match status" value="2"/>
</dbReference>
<dbReference type="Gene3D" id="3.90.960.10">
    <property type="entry name" value="YbaK/aminoacyl-tRNA synthetase-associated domain"/>
    <property type="match status" value="1"/>
</dbReference>
<dbReference type="HAMAP" id="MF_01569">
    <property type="entry name" value="Pro_tRNA_synth_type1"/>
    <property type="match status" value="1"/>
</dbReference>
<dbReference type="InterPro" id="IPR002314">
    <property type="entry name" value="aa-tRNA-synt_IIb"/>
</dbReference>
<dbReference type="InterPro" id="IPR006195">
    <property type="entry name" value="aa-tRNA-synth_II"/>
</dbReference>
<dbReference type="InterPro" id="IPR045864">
    <property type="entry name" value="aa-tRNA-synth_II/BPL/LPL"/>
</dbReference>
<dbReference type="InterPro" id="IPR004154">
    <property type="entry name" value="Anticodon-bd"/>
</dbReference>
<dbReference type="InterPro" id="IPR036621">
    <property type="entry name" value="Anticodon-bd_dom_sf"/>
</dbReference>
<dbReference type="InterPro" id="IPR002316">
    <property type="entry name" value="Pro-tRNA-ligase_IIa"/>
</dbReference>
<dbReference type="InterPro" id="IPR004500">
    <property type="entry name" value="Pro-tRNA-synth_IIa_bac-type"/>
</dbReference>
<dbReference type="InterPro" id="IPR023717">
    <property type="entry name" value="Pro-tRNA-Synthase_IIa_type1"/>
</dbReference>
<dbReference type="InterPro" id="IPR050062">
    <property type="entry name" value="Pro-tRNA_synthetase"/>
</dbReference>
<dbReference type="InterPro" id="IPR044140">
    <property type="entry name" value="ProRS_anticodon_short"/>
</dbReference>
<dbReference type="InterPro" id="IPR033730">
    <property type="entry name" value="ProRS_core_prok"/>
</dbReference>
<dbReference type="InterPro" id="IPR036754">
    <property type="entry name" value="YbaK/aa-tRNA-synt-asso_dom_sf"/>
</dbReference>
<dbReference type="InterPro" id="IPR007214">
    <property type="entry name" value="YbaK/aa-tRNA-synth-assoc-dom"/>
</dbReference>
<dbReference type="NCBIfam" id="NF006625">
    <property type="entry name" value="PRK09194.1"/>
    <property type="match status" value="1"/>
</dbReference>
<dbReference type="NCBIfam" id="TIGR00409">
    <property type="entry name" value="proS_fam_II"/>
    <property type="match status" value="1"/>
</dbReference>
<dbReference type="PANTHER" id="PTHR42753">
    <property type="entry name" value="MITOCHONDRIAL RIBOSOME PROTEIN L39/PROLYL-TRNA LIGASE FAMILY MEMBER"/>
    <property type="match status" value="1"/>
</dbReference>
<dbReference type="PANTHER" id="PTHR42753:SF2">
    <property type="entry name" value="PROLINE--TRNA LIGASE"/>
    <property type="match status" value="1"/>
</dbReference>
<dbReference type="Pfam" id="PF03129">
    <property type="entry name" value="HGTP_anticodon"/>
    <property type="match status" value="1"/>
</dbReference>
<dbReference type="Pfam" id="PF00587">
    <property type="entry name" value="tRNA-synt_2b"/>
    <property type="match status" value="1"/>
</dbReference>
<dbReference type="Pfam" id="PF04073">
    <property type="entry name" value="tRNA_edit"/>
    <property type="match status" value="1"/>
</dbReference>
<dbReference type="PIRSF" id="PIRSF001535">
    <property type="entry name" value="ProRS_1"/>
    <property type="match status" value="1"/>
</dbReference>
<dbReference type="PRINTS" id="PR01046">
    <property type="entry name" value="TRNASYNTHPRO"/>
</dbReference>
<dbReference type="SUPFAM" id="SSF52954">
    <property type="entry name" value="Class II aaRS ABD-related"/>
    <property type="match status" value="1"/>
</dbReference>
<dbReference type="SUPFAM" id="SSF55681">
    <property type="entry name" value="Class II aaRS and biotin synthetases"/>
    <property type="match status" value="1"/>
</dbReference>
<dbReference type="SUPFAM" id="SSF55826">
    <property type="entry name" value="YbaK/ProRS associated domain"/>
    <property type="match status" value="1"/>
</dbReference>
<dbReference type="PROSITE" id="PS50862">
    <property type="entry name" value="AA_TRNA_LIGASE_II"/>
    <property type="match status" value="1"/>
</dbReference>
<reference key="1">
    <citation type="journal article" date="2006" name="Mol. Microbiol.">
        <title>Role of pathogenicity island-associated integrases in the genome plasticity of uropathogenic Escherichia coli strain 536.</title>
        <authorList>
            <person name="Hochhut B."/>
            <person name="Wilde C."/>
            <person name="Balling G."/>
            <person name="Middendorf B."/>
            <person name="Dobrindt U."/>
            <person name="Brzuszkiewicz E."/>
            <person name="Gottschalk G."/>
            <person name="Carniel E."/>
            <person name="Hacker J."/>
        </authorList>
    </citation>
    <scope>NUCLEOTIDE SEQUENCE [LARGE SCALE GENOMIC DNA]</scope>
    <source>
        <strain>536 / UPEC</strain>
    </source>
</reference>
<proteinExistence type="inferred from homology"/>
<feature type="chain" id="PRO_0000288326" description="Proline--tRNA ligase">
    <location>
        <begin position="1"/>
        <end position="572"/>
    </location>
</feature>
<evidence type="ECO:0000255" key="1">
    <source>
        <dbReference type="HAMAP-Rule" id="MF_01569"/>
    </source>
</evidence>
<comment type="function">
    <text evidence="1">Catalyzes the attachment of proline to tRNA(Pro) in a two-step reaction: proline is first activated by ATP to form Pro-AMP and then transferred to the acceptor end of tRNA(Pro). As ProRS can inadvertently accommodate and process non-cognate amino acids such as alanine and cysteine, to avoid such errors it has two additional distinct editing activities against alanine. One activity is designated as 'pretransfer' editing and involves the tRNA(Pro)-independent hydrolysis of activated Ala-AMP. The other activity is designated 'posttransfer' editing and involves deacylation of mischarged Ala-tRNA(Pro). The misacylated Cys-tRNA(Pro) is not edited by ProRS.</text>
</comment>
<comment type="catalytic activity">
    <reaction evidence="1">
        <text>tRNA(Pro) + L-proline + ATP = L-prolyl-tRNA(Pro) + AMP + diphosphate</text>
        <dbReference type="Rhea" id="RHEA:14305"/>
        <dbReference type="Rhea" id="RHEA-COMP:9700"/>
        <dbReference type="Rhea" id="RHEA-COMP:9702"/>
        <dbReference type="ChEBI" id="CHEBI:30616"/>
        <dbReference type="ChEBI" id="CHEBI:33019"/>
        <dbReference type="ChEBI" id="CHEBI:60039"/>
        <dbReference type="ChEBI" id="CHEBI:78442"/>
        <dbReference type="ChEBI" id="CHEBI:78532"/>
        <dbReference type="ChEBI" id="CHEBI:456215"/>
        <dbReference type="EC" id="6.1.1.15"/>
    </reaction>
</comment>
<comment type="subunit">
    <text evidence="1">Homodimer.</text>
</comment>
<comment type="subcellular location">
    <subcellularLocation>
        <location evidence="1">Cytoplasm</location>
    </subcellularLocation>
</comment>
<comment type="domain">
    <text evidence="1">Consists of three domains: the N-terminal catalytic domain, the editing domain and the C-terminal anticodon-binding domain.</text>
</comment>
<comment type="similarity">
    <text evidence="1">Belongs to the class-II aminoacyl-tRNA synthetase family. ProS type 1 subfamily.</text>
</comment>
<accession>Q0TLD7</accession>
<keyword id="KW-0030">Aminoacyl-tRNA synthetase</keyword>
<keyword id="KW-0067">ATP-binding</keyword>
<keyword id="KW-0963">Cytoplasm</keyword>
<keyword id="KW-0436">Ligase</keyword>
<keyword id="KW-0547">Nucleotide-binding</keyword>
<keyword id="KW-0648">Protein biosynthesis</keyword>
<gene>
    <name evidence="1" type="primary">proS</name>
    <name type="ordered locus">ECP_0204</name>
</gene>
<sequence length="572" mass="63603">MRTSQYLLSTLKETPADAEVISHQLMLRAGMIRKLASGLYTWLPTGVRVLKKVENIVREEMNNAGAIEVLMPVVQPSELWQESGRWEQYGPELLRIADRGDRPFVLGPTHEEVITDLIRNELSSYKQLPLNFYQIQTKFRDEVRPRFGVMRSREFLMKDAYSFHTSQESLQETYDAMYAAYSKIFSRMGLDFRAVQADTGSIGGSASHEFQVLAQSGEDDVVFSDTSDYAANIELAEAIAPKEPRAAATQEMTLVDTPNAKTIAELVEQFNLPIEKTVKTLLVKAVEGSSFPLVALLVRGDHELNEVKAEKLPQVASPLTFATEEEIRAVVKAGPGSLGPVNMPIPVVIDRTVAAMSDFAAGANIDGKHYFGINWDRDVATPEIADIRNVVAGDPSPDGQGTLLIKRGIEVGHIFQLGTKYSEALKASVQGEDGRNQILTMGCYGIGVTRVVAAAIEQNYDERGIVWPDAIAPFQVAILPMNMHKSFRVQELAEKLYSELRAQGIEVLLDDRKERPGVMFADMELIGIPHTIVLGDRNLDNDDIEYKYRRNGEKQLIKTGDIVDYLVKQIKG</sequence>
<name>SYP_ECOL5</name>
<protein>
    <recommendedName>
        <fullName evidence="1">Proline--tRNA ligase</fullName>
        <ecNumber evidence="1">6.1.1.15</ecNumber>
    </recommendedName>
    <alternativeName>
        <fullName evidence="1">Prolyl-tRNA synthetase</fullName>
        <shortName evidence="1">ProRS</shortName>
    </alternativeName>
</protein>